<keyword id="KW-0067">ATP-binding</keyword>
<keyword id="KW-0965">Cell junction</keyword>
<keyword id="KW-1003">Cell membrane</keyword>
<keyword id="KW-0303">Gap junction</keyword>
<keyword id="KW-0418">Kinase</keyword>
<keyword id="KW-0472">Membrane</keyword>
<keyword id="KW-0547">Nucleotide-binding</keyword>
<keyword id="KW-0597">Phosphoprotein</keyword>
<keyword id="KW-1185">Reference proteome</keyword>
<keyword id="KW-0677">Repeat</keyword>
<keyword id="KW-0728">SH3 domain</keyword>
<keyword id="KW-0796">Tight junction</keyword>
<keyword id="KW-0808">Transferase</keyword>
<evidence type="ECO:0000250" key="1">
    <source>
        <dbReference type="UniProtKB" id="O97758"/>
    </source>
</evidence>
<evidence type="ECO:0000250" key="2">
    <source>
        <dbReference type="UniProtKB" id="P12830"/>
    </source>
</evidence>
<evidence type="ECO:0000250" key="3">
    <source>
        <dbReference type="UniProtKB" id="P39447"/>
    </source>
</evidence>
<evidence type="ECO:0000250" key="4">
    <source>
        <dbReference type="UniProtKB" id="Q07157"/>
    </source>
</evidence>
<evidence type="ECO:0000255" key="5">
    <source>
        <dbReference type="PROSITE-ProRule" id="PRU00100"/>
    </source>
</evidence>
<evidence type="ECO:0000255" key="6">
    <source>
        <dbReference type="PROSITE-ProRule" id="PRU00143"/>
    </source>
</evidence>
<evidence type="ECO:0000255" key="7">
    <source>
        <dbReference type="PROSITE-ProRule" id="PRU00192"/>
    </source>
</evidence>
<evidence type="ECO:0000255" key="8">
    <source>
        <dbReference type="PROSITE-ProRule" id="PRU00485"/>
    </source>
</evidence>
<evidence type="ECO:0000256" key="9">
    <source>
        <dbReference type="SAM" id="MobiDB-lite"/>
    </source>
</evidence>
<evidence type="ECO:0000269" key="10">
    <source>
    </source>
</evidence>
<evidence type="ECO:0000269" key="11">
    <source>
    </source>
</evidence>
<evidence type="ECO:0000303" key="12">
    <source>
    </source>
</evidence>
<evidence type="ECO:0000305" key="13"/>
<evidence type="ECO:0007744" key="14">
    <source>
    </source>
</evidence>
<evidence type="ECO:0007744" key="15">
    <source>
    </source>
</evidence>
<organism>
    <name type="scientific">Rattus norvegicus</name>
    <name type="common">Rat</name>
    <dbReference type="NCBI Taxonomy" id="10116"/>
    <lineage>
        <taxon>Eukaryota</taxon>
        <taxon>Metazoa</taxon>
        <taxon>Chordata</taxon>
        <taxon>Craniata</taxon>
        <taxon>Vertebrata</taxon>
        <taxon>Euteleostomi</taxon>
        <taxon>Mammalia</taxon>
        <taxon>Eutheria</taxon>
        <taxon>Euarchontoglires</taxon>
        <taxon>Glires</taxon>
        <taxon>Rodentia</taxon>
        <taxon>Myomorpha</taxon>
        <taxon>Muroidea</taxon>
        <taxon>Muridae</taxon>
        <taxon>Murinae</taxon>
        <taxon>Rattus</taxon>
    </lineage>
</organism>
<proteinExistence type="evidence at protein level"/>
<gene>
    <name evidence="12" type="primary">Tjp1</name>
</gene>
<accession>A0A0G2K2P5</accession>
<name>ZO1_RAT</name>
<reference key="1">
    <citation type="journal article" date="2004" name="Nature">
        <title>Genome sequence of the Brown Norway rat yields insights into mammalian evolution.</title>
        <authorList>
            <person name="Gibbs R.A."/>
            <person name="Weinstock G.M."/>
            <person name="Metzker M.L."/>
            <person name="Muzny D.M."/>
            <person name="Sodergren E.J."/>
            <person name="Scherer S."/>
            <person name="Scott G."/>
            <person name="Steffen D."/>
            <person name="Worley K.C."/>
            <person name="Burch P.E."/>
            <person name="Okwuonu G."/>
            <person name="Hines S."/>
            <person name="Lewis L."/>
            <person name="Deramo C."/>
            <person name="Delgado O."/>
            <person name="Dugan-Rocha S."/>
            <person name="Miner G."/>
            <person name="Morgan M."/>
            <person name="Hawes A."/>
            <person name="Gill R."/>
            <person name="Holt R.A."/>
            <person name="Adams M.D."/>
            <person name="Amanatides P.G."/>
            <person name="Baden-Tillson H."/>
            <person name="Barnstead M."/>
            <person name="Chin S."/>
            <person name="Evans C.A."/>
            <person name="Ferriera S."/>
            <person name="Fosler C."/>
            <person name="Glodek A."/>
            <person name="Gu Z."/>
            <person name="Jennings D."/>
            <person name="Kraft C.L."/>
            <person name="Nguyen T."/>
            <person name="Pfannkoch C.M."/>
            <person name="Sitter C."/>
            <person name="Sutton G.G."/>
            <person name="Venter J.C."/>
            <person name="Woodage T."/>
            <person name="Smith D."/>
            <person name="Lee H.-M."/>
            <person name="Gustafson E."/>
            <person name="Cahill P."/>
            <person name="Kana A."/>
            <person name="Doucette-Stamm L."/>
            <person name="Weinstock K."/>
            <person name="Fechtel K."/>
            <person name="Weiss R.B."/>
            <person name="Dunn D.M."/>
            <person name="Green E.D."/>
            <person name="Blakesley R.W."/>
            <person name="Bouffard G.G."/>
            <person name="De Jong P.J."/>
            <person name="Osoegawa K."/>
            <person name="Zhu B."/>
            <person name="Marra M."/>
            <person name="Schein J."/>
            <person name="Bosdet I."/>
            <person name="Fjell C."/>
            <person name="Jones S."/>
            <person name="Krzywinski M."/>
            <person name="Mathewson C."/>
            <person name="Siddiqui A."/>
            <person name="Wye N."/>
            <person name="McPherson J."/>
            <person name="Zhao S."/>
            <person name="Fraser C.M."/>
            <person name="Shetty J."/>
            <person name="Shatsman S."/>
            <person name="Geer K."/>
            <person name="Chen Y."/>
            <person name="Abramzon S."/>
            <person name="Nierman W.C."/>
            <person name="Havlak P.H."/>
            <person name="Chen R."/>
            <person name="Durbin K.J."/>
            <person name="Egan A."/>
            <person name="Ren Y."/>
            <person name="Song X.-Z."/>
            <person name="Li B."/>
            <person name="Liu Y."/>
            <person name="Qin X."/>
            <person name="Cawley S."/>
            <person name="Cooney A.J."/>
            <person name="D'Souza L.M."/>
            <person name="Martin K."/>
            <person name="Wu J.Q."/>
            <person name="Gonzalez-Garay M.L."/>
            <person name="Jackson A.R."/>
            <person name="Kalafus K.J."/>
            <person name="McLeod M.P."/>
            <person name="Milosavljevic A."/>
            <person name="Virk D."/>
            <person name="Volkov A."/>
            <person name="Wheeler D.A."/>
            <person name="Zhang Z."/>
            <person name="Bailey J.A."/>
            <person name="Eichler E.E."/>
            <person name="Tuzun E."/>
            <person name="Birney E."/>
            <person name="Mongin E."/>
            <person name="Ureta-Vidal A."/>
            <person name="Woodwark C."/>
            <person name="Zdobnov E."/>
            <person name="Bork P."/>
            <person name="Suyama M."/>
            <person name="Torrents D."/>
            <person name="Alexandersson M."/>
            <person name="Trask B.J."/>
            <person name="Young J.M."/>
            <person name="Huang H."/>
            <person name="Wang H."/>
            <person name="Xing H."/>
            <person name="Daniels S."/>
            <person name="Gietzen D."/>
            <person name="Schmidt J."/>
            <person name="Stevens K."/>
            <person name="Vitt U."/>
            <person name="Wingrove J."/>
            <person name="Camara F."/>
            <person name="Mar Alba M."/>
            <person name="Abril J.F."/>
            <person name="Guigo R."/>
            <person name="Smit A."/>
            <person name="Dubchak I."/>
            <person name="Rubin E.M."/>
            <person name="Couronne O."/>
            <person name="Poliakov A."/>
            <person name="Huebner N."/>
            <person name="Ganten D."/>
            <person name="Goesele C."/>
            <person name="Hummel O."/>
            <person name="Kreitler T."/>
            <person name="Lee Y.-A."/>
            <person name="Monti J."/>
            <person name="Schulz H."/>
            <person name="Zimdahl H."/>
            <person name="Himmelbauer H."/>
            <person name="Lehrach H."/>
            <person name="Jacob H.J."/>
            <person name="Bromberg S."/>
            <person name="Gullings-Handley J."/>
            <person name="Jensen-Seaman M.I."/>
            <person name="Kwitek A.E."/>
            <person name="Lazar J."/>
            <person name="Pasko D."/>
            <person name="Tonellato P.J."/>
            <person name="Twigger S."/>
            <person name="Ponting C.P."/>
            <person name="Duarte J.M."/>
            <person name="Rice S."/>
            <person name="Goodstadt L."/>
            <person name="Beatson S.A."/>
            <person name="Emes R.D."/>
            <person name="Winter E.E."/>
            <person name="Webber C."/>
            <person name="Brandt P."/>
            <person name="Nyakatura G."/>
            <person name="Adetobi M."/>
            <person name="Chiaromonte F."/>
            <person name="Elnitski L."/>
            <person name="Eswara P."/>
            <person name="Hardison R.C."/>
            <person name="Hou M."/>
            <person name="Kolbe D."/>
            <person name="Makova K."/>
            <person name="Miller W."/>
            <person name="Nekrutenko A."/>
            <person name="Riemer C."/>
            <person name="Schwartz S."/>
            <person name="Taylor J."/>
            <person name="Yang S."/>
            <person name="Zhang Y."/>
            <person name="Lindpaintner K."/>
            <person name="Andrews T.D."/>
            <person name="Caccamo M."/>
            <person name="Clamp M."/>
            <person name="Clarke L."/>
            <person name="Curwen V."/>
            <person name="Durbin R.M."/>
            <person name="Eyras E."/>
            <person name="Searle S.M."/>
            <person name="Cooper G.M."/>
            <person name="Batzoglou S."/>
            <person name="Brudno M."/>
            <person name="Sidow A."/>
            <person name="Stone E.A."/>
            <person name="Payseur B.A."/>
            <person name="Bourque G."/>
            <person name="Lopez-Otin C."/>
            <person name="Puente X.S."/>
            <person name="Chakrabarti K."/>
            <person name="Chatterji S."/>
            <person name="Dewey C."/>
            <person name="Pachter L."/>
            <person name="Bray N."/>
            <person name="Yap V.B."/>
            <person name="Caspi A."/>
            <person name="Tesler G."/>
            <person name="Pevzner P.A."/>
            <person name="Haussler D."/>
            <person name="Roskin K.M."/>
            <person name="Baertsch R."/>
            <person name="Clawson H."/>
            <person name="Furey T.S."/>
            <person name="Hinrichs A.S."/>
            <person name="Karolchik D."/>
            <person name="Kent W.J."/>
            <person name="Rosenbloom K.R."/>
            <person name="Trumbower H."/>
            <person name="Weirauch M."/>
            <person name="Cooper D.N."/>
            <person name="Stenson P.D."/>
            <person name="Ma B."/>
            <person name="Brent M."/>
            <person name="Arumugam M."/>
            <person name="Shteynberg D."/>
            <person name="Copley R.R."/>
            <person name="Taylor M.S."/>
            <person name="Riethman H."/>
            <person name="Mudunuri U."/>
            <person name="Peterson J."/>
            <person name="Guyer M."/>
            <person name="Felsenfeld A."/>
            <person name="Old S."/>
            <person name="Mockrin S."/>
            <person name="Collins F.S."/>
        </authorList>
    </citation>
    <scope>NUCLEOTIDE SEQUENCE [LARGE SCALE GENOMIC DNA]</scope>
    <source>
        <strain>Brown Norway</strain>
    </source>
</reference>
<reference key="2">
    <citation type="journal article" date="1986" name="J. Cell Biol.">
        <title>Identification of ZO-1: a high molecular weight polypeptide associated with the tight junction (zonula occludens) in a variety of epithelia.</title>
        <authorList>
            <person name="Stevenson B.R."/>
            <person name="Siliciano J.D."/>
            <person name="Mooseker M.S."/>
            <person name="Goodenough D.A."/>
        </authorList>
    </citation>
    <scope>SUBCELLULAR LOCATION</scope>
</reference>
<reference key="3">
    <citation type="journal article" date="1998" name="Curr. Biol.">
        <title>The gap junction protein connexin43 interacts with the second PDZ domain of the zona occludens-1 protein.</title>
        <authorList>
            <person name="Giepmans B.N."/>
            <person name="Moolenaar W.H."/>
        </authorList>
    </citation>
    <scope>FUNCTION</scope>
    <scope>INTERACTION WITH GJA1</scope>
    <scope>SUBCELLULAR LOCATION</scope>
    <scope>DOMAIN</scope>
</reference>
<reference key="4">
    <citation type="journal article" date="2006" name="Proc. Natl. Acad. Sci. U.S.A.">
        <title>Quantitative phosphoproteomics of vasopressin-sensitive renal cells: regulation of aquaporin-2 phosphorylation at two sites.</title>
        <authorList>
            <person name="Hoffert J.D."/>
            <person name="Pisitkun T."/>
            <person name="Wang G."/>
            <person name="Shen R.-F."/>
            <person name="Knepper M.A."/>
        </authorList>
    </citation>
    <scope>PHOSPHORYLATION [LARGE SCALE ANALYSIS] AT SER-125; TYR-132 AND SER-617</scope>
    <scope>IDENTIFICATION BY MASS SPECTROMETRY [LARGE SCALE ANALYSIS]</scope>
</reference>
<reference key="5">
    <citation type="journal article" date="2012" name="Nat. Commun.">
        <title>Quantitative maps of protein phosphorylation sites across 14 different rat organs and tissues.</title>
        <authorList>
            <person name="Lundby A."/>
            <person name="Secher A."/>
            <person name="Lage K."/>
            <person name="Nordsborg N.B."/>
            <person name="Dmytriyev A."/>
            <person name="Lundby C."/>
            <person name="Olsen J.V."/>
        </authorList>
    </citation>
    <scope>PHOSPHORYLATION [LARGE SCALE ANALYSIS] AT SER-125; SER-175; SER-178; SER-212; SER-275; SER-277; SER-280; SER-290; SER-294; SER-297; SER-300; SER-617; SER-810; SER-828; THR-846; THR-868 AND SER-1614</scope>
    <scope>IDENTIFICATION BY MASS SPECTROMETRY [LARGE SCALE ANALYSIS]</scope>
</reference>
<protein>
    <recommendedName>
        <fullName evidence="4">Tight junction protein ZO-1</fullName>
    </recommendedName>
    <alternativeName>
        <fullName evidence="4">Tight junction protein 1</fullName>
    </alternativeName>
    <alternativeName>
        <fullName evidence="12">Zona occludens protein 1</fullName>
    </alternativeName>
    <alternativeName>
        <fullName evidence="4">Zonula occludens protein 1</fullName>
    </alternativeName>
</protein>
<sequence>MSARAAAAKSTAMEETAIWEQHTVTLHRAPGFGFGIAISGGRDNPHFQSGETSIVISDVLKGGPAEGQLQENDRVAMVNGVSMDNVEHAFAVQQLRKSGKNAKITIRRKKKVQIPVSHPDPDPVSDNEDDSYDEDVHDPRSGRGALANRRGEKSWARDRSASRDRSLSPRSDRRSVASSQPAKPTKVTLVKSRKNEEYGLRLASHIFVKEISQDSLAARDGNIQEGDVVLKINGTVTENMSLTDAKTLIERSKGKLKMVVQRDERATLLNVPDLSDSIHSANASERDDISEIQSLASDHSVRSHDRPPRRSQSRSPDQRSEPSDHSTQSPQQPSNGSLRSREEERMSKPGAVSTPVKHVDDHTPKAVEEVTVEKHEKQTPTLPEPKPVYAQVGQPDVDLPVSPSDGVLPNSTHEDGILRPSMKLVKFRKGDSVGLRLAGGNDVGIFVAGVLEDSPAAKEGLEEGDQILRVNNVDFTNIIREEAVLFLLDLPKGEEVTILAQKKKDVYRRIVESDVGDSFYIRTHFEYEKESPYGLSFNKGEVFRVVDTLYNGKLGSWLAIRIGKNHKEVERGIVPNKNRAEQLASVQYTLPKTAGGDRADFWRFRGLRSSKRNLRKSREDLSAQPVQTKFPAYERVVLREAGFLRPVTIFGPIADVAREKLAREEPDIYQIAKSEPRDAGTDHRSSGIIRLHTIKQIIDQDKHALLDVTPNAVDRLNYAQWYPIVVFLNPDSKQGVKTMRMRLCPESRKSARKLYERSHKLRKNNHHLFTTTINLNSMNDGWYGALKEAIQQQQNQLVWVSEGKADGATSDDLDLHDDRLSYLSAPGSEYSMYSTDSRHTSDYEDTDTEGGAYTDQELDETLNDEVGTPPESAITRSSEPVREDSSGMHHENQTYPPYSPQAQPQAIHRIDSPGLKTASQQKAEASSPVPYLSPETNPASSASAVKHNVNLTNVNLEEPTPAPPTSHVSQADCLGAPSPEAPHTMLRDEGVSLPSHVDPAKVYRKEPYPEEMMRQNHILKQPALGHPGQRLDKEPNPAYDPQLPYVEKQASRDLEQPPYRYESSSYTDQFSRNYDHRLRFEDRVPTYEDQWSYYDDKQPYPTRPFDTQHPRDLDSRQHPEEASERGYFQRFEEPAPLPYDSRPRYEQLPRTSTLRHEEQPTSGYEVHNRYRPEAQPYAPAGPKSSEPKQYFDQYPRSYEQVPPPGFTSKTGHYEPLHGAAVVPPLIPSSQHKPEVLPSATKPQPPPPALTEEEEDPAMKPQSVLTRVKMFENKRSASLENKKDVNDTASFKPPEVASKPPSASLVGPKPVSQTQFSEHDKTLYRLPEPQKPQAKPPEDIVRSNHYDPEEDEEYYRKQLSYFDRRSFESKPPAHIPAGHHSEPAKPVHSQSQPNFSSYSSKGKPETDAMDRSFSEKRYDPTQAMPPPPPLPSQYSQPVPPLSNSSLHIHSKAAQSEGNSVSLDFQNSYISKPDPPPSQSKPATFRPPTREDPPQTFYPQKSFPDKASVNGAEQTQKTITPAYNRFTPKPYTSSARPFERKFESPKFNHNLLPSETVHKPELSSKPPPSPKTLMKAHSSTQPPEFDSGVETFSVHTDKPKYQINNISTMPKAVPVSPSAVEEDEDEDGHTVVATARGIFNSNGGVLSSIETGVSIIIPQGAIPEGIEQEIYFKVCRDNSILPPLDKEKGETLLSPLVMCGPHGLKFLKPVELRLPHCASMTPDGWSFALKSSDSSSGDPKTWQNKCLPGDPNYLVGANCVSVLIDHF</sequence>
<dbReference type="EMBL" id="AABR07004128">
    <property type="status" value="NOT_ANNOTATED_CDS"/>
    <property type="molecule type" value="Genomic_DNA"/>
</dbReference>
<dbReference type="EMBL" id="AABR07004129">
    <property type="status" value="NOT_ANNOTATED_CDS"/>
    <property type="molecule type" value="Genomic_DNA"/>
</dbReference>
<dbReference type="RefSeq" id="XP_063140420.1">
    <property type="nucleotide sequence ID" value="XM_063284350.1"/>
</dbReference>
<dbReference type="SMR" id="A0A0G2K2P5"/>
<dbReference type="CORUM" id="A0A0G2K2P5"/>
<dbReference type="FunCoup" id="A0A0G2K2P5">
    <property type="interactions" value="3335"/>
</dbReference>
<dbReference type="IntAct" id="A0A0G2K2P5">
    <property type="interactions" value="2"/>
</dbReference>
<dbReference type="STRING" id="10116.ENSRNOP00000072324"/>
<dbReference type="GlyGen" id="A0A0G2K2P5">
    <property type="glycosylation" value="1 site"/>
</dbReference>
<dbReference type="iPTMnet" id="A0A0G2K2P5"/>
<dbReference type="PhosphoSitePlus" id="A0A0G2K2P5"/>
<dbReference type="jPOST" id="A0A0G2K2P5"/>
<dbReference type="PaxDb" id="10116-ENSRNOP00000014988"/>
<dbReference type="Ensembl" id="ENSRNOT00000112594.1">
    <property type="protein sequence ID" value="ENSRNOP00000078542.1"/>
    <property type="gene ID" value="ENSRNOG00000011077.8"/>
</dbReference>
<dbReference type="GeneID" id="292994"/>
<dbReference type="AGR" id="RGD:1306305"/>
<dbReference type="RGD" id="1306305">
    <property type="gene designation" value="Tjp1"/>
</dbReference>
<dbReference type="GeneTree" id="ENSGT00940000155164"/>
<dbReference type="InParanoid" id="A0A0G2K2P5"/>
<dbReference type="OMA" id="QPVHRID"/>
<dbReference type="Reactome" id="R-RNO-191650">
    <property type="pathway name" value="Regulation of gap junction activity"/>
</dbReference>
<dbReference type="Reactome" id="R-RNO-2028269">
    <property type="pathway name" value="Signaling by Hippo"/>
</dbReference>
<dbReference type="Reactome" id="R-RNO-351906">
    <property type="pathway name" value="Apoptotic cleavage of cell adhesion proteins"/>
</dbReference>
<dbReference type="PRO" id="PR:A0A0G2K2P5"/>
<dbReference type="Proteomes" id="UP000002494">
    <property type="component" value="Chromosome 1"/>
</dbReference>
<dbReference type="Bgee" id="ENSRNOG00000011077">
    <property type="expression patterns" value="Expressed in lung and 19 other cell types or tissues"/>
</dbReference>
<dbReference type="ExpressionAtlas" id="A0A0G2K2P5">
    <property type="expression patterns" value="baseline and differential"/>
</dbReference>
<dbReference type="GO" id="GO:0005912">
    <property type="term" value="C:adherens junction"/>
    <property type="evidence" value="ECO:0000266"/>
    <property type="project" value="RGD"/>
</dbReference>
<dbReference type="GO" id="GO:0043296">
    <property type="term" value="C:apical junction complex"/>
    <property type="evidence" value="ECO:0000266"/>
    <property type="project" value="RGD"/>
</dbReference>
<dbReference type="GO" id="GO:0045177">
    <property type="term" value="C:apical part of cell"/>
    <property type="evidence" value="ECO:0000266"/>
    <property type="project" value="RGD"/>
</dbReference>
<dbReference type="GO" id="GO:0016324">
    <property type="term" value="C:apical plasma membrane"/>
    <property type="evidence" value="ECO:0000266"/>
    <property type="project" value="RGD"/>
</dbReference>
<dbReference type="GO" id="GO:0016327">
    <property type="term" value="C:apicolateral plasma membrane"/>
    <property type="evidence" value="ECO:0000266"/>
    <property type="project" value="RGD"/>
</dbReference>
<dbReference type="GO" id="GO:0016323">
    <property type="term" value="C:basolateral plasma membrane"/>
    <property type="evidence" value="ECO:0000266"/>
    <property type="project" value="RGD"/>
</dbReference>
<dbReference type="GO" id="GO:0005923">
    <property type="term" value="C:bicellular tight junction"/>
    <property type="evidence" value="ECO:0000314"/>
    <property type="project" value="RGD"/>
</dbReference>
<dbReference type="GO" id="GO:0030054">
    <property type="term" value="C:cell junction"/>
    <property type="evidence" value="ECO:0000266"/>
    <property type="project" value="RGD"/>
</dbReference>
<dbReference type="GO" id="GO:0009986">
    <property type="term" value="C:cell surface"/>
    <property type="evidence" value="ECO:0000266"/>
    <property type="project" value="RGD"/>
</dbReference>
<dbReference type="GO" id="GO:0005911">
    <property type="term" value="C:cell-cell junction"/>
    <property type="evidence" value="ECO:0000314"/>
    <property type="project" value="ARUK-UCL"/>
</dbReference>
<dbReference type="GO" id="GO:0005737">
    <property type="term" value="C:cytoplasm"/>
    <property type="evidence" value="ECO:0000266"/>
    <property type="project" value="RGD"/>
</dbReference>
<dbReference type="GO" id="GO:0031410">
    <property type="term" value="C:cytoplasmic vesicle"/>
    <property type="evidence" value="ECO:0000266"/>
    <property type="project" value="RGD"/>
</dbReference>
<dbReference type="GO" id="GO:0005921">
    <property type="term" value="C:gap junction"/>
    <property type="evidence" value="ECO:0000314"/>
    <property type="project" value="UniProtKB"/>
</dbReference>
<dbReference type="GO" id="GO:0014704">
    <property type="term" value="C:intercalated disc"/>
    <property type="evidence" value="ECO:0000266"/>
    <property type="project" value="RGD"/>
</dbReference>
<dbReference type="GO" id="GO:0046581">
    <property type="term" value="C:intercellular canaliculus"/>
    <property type="evidence" value="ECO:0000266"/>
    <property type="project" value="RGD"/>
</dbReference>
<dbReference type="GO" id="GO:0016020">
    <property type="term" value="C:membrane"/>
    <property type="evidence" value="ECO:0000266"/>
    <property type="project" value="RGD"/>
</dbReference>
<dbReference type="GO" id="GO:0005634">
    <property type="term" value="C:nucleus"/>
    <property type="evidence" value="ECO:0000266"/>
    <property type="project" value="RGD"/>
</dbReference>
<dbReference type="GO" id="GO:0005886">
    <property type="term" value="C:plasma membrane"/>
    <property type="evidence" value="ECO:0000250"/>
    <property type="project" value="UniProtKB"/>
</dbReference>
<dbReference type="GO" id="GO:0032991">
    <property type="term" value="C:protein-containing complex"/>
    <property type="evidence" value="ECO:0000266"/>
    <property type="project" value="RGD"/>
</dbReference>
<dbReference type="GO" id="GO:0070160">
    <property type="term" value="C:tight junction"/>
    <property type="evidence" value="ECO:0000266"/>
    <property type="project" value="RGD"/>
</dbReference>
<dbReference type="GO" id="GO:0005524">
    <property type="term" value="F:ATP binding"/>
    <property type="evidence" value="ECO:0007669"/>
    <property type="project" value="UniProtKB-KW"/>
</dbReference>
<dbReference type="GO" id="GO:0008013">
    <property type="term" value="F:beta-catenin binding"/>
    <property type="evidence" value="ECO:0000353"/>
    <property type="project" value="RGD"/>
</dbReference>
<dbReference type="GO" id="GO:0050839">
    <property type="term" value="F:cell adhesion molecule binding"/>
    <property type="evidence" value="ECO:0000318"/>
    <property type="project" value="GO_Central"/>
</dbReference>
<dbReference type="GO" id="GO:0071253">
    <property type="term" value="F:connexin binding"/>
    <property type="evidence" value="ECO:0000266"/>
    <property type="project" value="RGD"/>
</dbReference>
<dbReference type="GO" id="GO:0016301">
    <property type="term" value="F:kinase activity"/>
    <property type="evidence" value="ECO:0007669"/>
    <property type="project" value="UniProtKB-KW"/>
</dbReference>
<dbReference type="GO" id="GO:0019904">
    <property type="term" value="F:protein domain specific binding"/>
    <property type="evidence" value="ECO:0000266"/>
    <property type="project" value="RGD"/>
</dbReference>
<dbReference type="GO" id="GO:0044325">
    <property type="term" value="F:transmembrane transporter binding"/>
    <property type="evidence" value="ECO:0000353"/>
    <property type="project" value="RGD"/>
</dbReference>
<dbReference type="GO" id="GO:0030036">
    <property type="term" value="P:actin cytoskeleton organization"/>
    <property type="evidence" value="ECO:0000266"/>
    <property type="project" value="RGD"/>
</dbReference>
<dbReference type="GO" id="GO:0031032">
    <property type="term" value="P:actomyosin structure organization"/>
    <property type="evidence" value="ECO:0000266"/>
    <property type="project" value="RGD"/>
</dbReference>
<dbReference type="GO" id="GO:0034334">
    <property type="term" value="P:adherens junction maintenance"/>
    <property type="evidence" value="ECO:0000266"/>
    <property type="project" value="RGD"/>
</dbReference>
<dbReference type="GO" id="GO:0036305">
    <property type="term" value="P:ameloblast differentiation"/>
    <property type="evidence" value="ECO:0000250"/>
    <property type="project" value="UniProtKB"/>
</dbReference>
<dbReference type="GO" id="GO:0070830">
    <property type="term" value="P:bicellular tight junction assembly"/>
    <property type="evidence" value="ECO:0000266"/>
    <property type="project" value="RGD"/>
</dbReference>
<dbReference type="GO" id="GO:0001825">
    <property type="term" value="P:blastocyst formation"/>
    <property type="evidence" value="ECO:0000266"/>
    <property type="project" value="RGD"/>
</dbReference>
<dbReference type="GO" id="GO:0098609">
    <property type="term" value="P:cell-cell adhesion"/>
    <property type="evidence" value="ECO:0000318"/>
    <property type="project" value="GO_Central"/>
</dbReference>
<dbReference type="GO" id="GO:0045216">
    <property type="term" value="P:cell-cell junction organization"/>
    <property type="evidence" value="ECO:0000266"/>
    <property type="project" value="RGD"/>
</dbReference>
<dbReference type="GO" id="GO:0071277">
    <property type="term" value="P:cellular response to calcium ion"/>
    <property type="evidence" value="ECO:0000266"/>
    <property type="project" value="RGD"/>
</dbReference>
<dbReference type="GO" id="GO:0071333">
    <property type="term" value="P:cellular response to glucose stimulus"/>
    <property type="evidence" value="ECO:0000270"/>
    <property type="project" value="RGD"/>
</dbReference>
<dbReference type="GO" id="GO:0090557">
    <property type="term" value="P:establishment of endothelial intestinal barrier"/>
    <property type="evidence" value="ECO:0000266"/>
    <property type="project" value="RGD"/>
</dbReference>
<dbReference type="GO" id="GO:0043066">
    <property type="term" value="P:negative regulation of apoptotic process"/>
    <property type="evidence" value="ECO:0000266"/>
    <property type="project" value="RGD"/>
</dbReference>
<dbReference type="GO" id="GO:0051497">
    <property type="term" value="P:negative regulation of stress fiber assembly"/>
    <property type="evidence" value="ECO:0000266"/>
    <property type="project" value="RGD"/>
</dbReference>
<dbReference type="GO" id="GO:0043116">
    <property type="term" value="P:negative regulation of vascular permeability"/>
    <property type="evidence" value="ECO:0000270"/>
    <property type="project" value="RGD"/>
</dbReference>
<dbReference type="GO" id="GO:1905605">
    <property type="term" value="P:positive regulation of blood-brain barrier permeability"/>
    <property type="evidence" value="ECO:0000266"/>
    <property type="project" value="RGD"/>
</dbReference>
<dbReference type="GO" id="GO:0030335">
    <property type="term" value="P:positive regulation of cell migration"/>
    <property type="evidence" value="ECO:0000266"/>
    <property type="project" value="RGD"/>
</dbReference>
<dbReference type="GO" id="GO:0008284">
    <property type="term" value="P:positive regulation of cell population proliferation"/>
    <property type="evidence" value="ECO:0000266"/>
    <property type="project" value="RGD"/>
</dbReference>
<dbReference type="GO" id="GO:2000049">
    <property type="term" value="P:positive regulation of cell-cell adhesion mediated by cadherin"/>
    <property type="evidence" value="ECO:0000266"/>
    <property type="project" value="RGD"/>
</dbReference>
<dbReference type="GO" id="GO:1903672">
    <property type="term" value="P:positive regulation of sprouting angiogenesis"/>
    <property type="evidence" value="ECO:0000266"/>
    <property type="project" value="RGD"/>
</dbReference>
<dbReference type="GO" id="GO:0071896">
    <property type="term" value="P:protein localization to adherens junction"/>
    <property type="evidence" value="ECO:0000266"/>
    <property type="project" value="RGD"/>
</dbReference>
<dbReference type="GO" id="GO:1902396">
    <property type="term" value="P:protein localization to bicellular tight junction"/>
    <property type="evidence" value="ECO:0000266"/>
    <property type="project" value="RGD"/>
</dbReference>
<dbReference type="GO" id="GO:0150105">
    <property type="term" value="P:protein localization to cell-cell junction"/>
    <property type="evidence" value="ECO:0000266"/>
    <property type="project" value="RGD"/>
</dbReference>
<dbReference type="GO" id="GO:2000810">
    <property type="term" value="P:regulation of bicellular tight junction assembly"/>
    <property type="evidence" value="ECO:0000266"/>
    <property type="project" value="RGD"/>
</dbReference>
<dbReference type="GO" id="GO:1901888">
    <property type="term" value="P:regulation of cell junction assembly"/>
    <property type="evidence" value="ECO:0000266"/>
    <property type="project" value="RGD"/>
</dbReference>
<dbReference type="GO" id="GO:0051493">
    <property type="term" value="P:regulation of cytoskeleton organization"/>
    <property type="evidence" value="ECO:0000266"/>
    <property type="project" value="RGD"/>
</dbReference>
<dbReference type="GO" id="GO:0045471">
    <property type="term" value="P:response to ethanol"/>
    <property type="evidence" value="ECO:0000270"/>
    <property type="project" value="RGD"/>
</dbReference>
<dbReference type="GO" id="GO:0032496">
    <property type="term" value="P:response to lipopolysaccharide"/>
    <property type="evidence" value="ECO:0000270"/>
    <property type="project" value="RGD"/>
</dbReference>
<dbReference type="GO" id="GO:0071000">
    <property type="term" value="P:response to magnetism"/>
    <property type="evidence" value="ECO:0000270"/>
    <property type="project" value="RGD"/>
</dbReference>
<dbReference type="GO" id="GO:0009410">
    <property type="term" value="P:response to xenobiotic stimulus"/>
    <property type="evidence" value="ECO:0000270"/>
    <property type="project" value="RGD"/>
</dbReference>
<dbReference type="GO" id="GO:0007605">
    <property type="term" value="P:sensory perception of sound"/>
    <property type="evidence" value="ECO:0000266"/>
    <property type="project" value="RGD"/>
</dbReference>
<dbReference type="CDD" id="cd06727">
    <property type="entry name" value="PDZ1_ZO1-like"/>
    <property type="match status" value="1"/>
</dbReference>
<dbReference type="CDD" id="cd06728">
    <property type="entry name" value="PDZ2_ZO1-like_ds"/>
    <property type="match status" value="1"/>
</dbReference>
<dbReference type="CDD" id="cd06729">
    <property type="entry name" value="PDZ3_ZO1-like_domain"/>
    <property type="match status" value="1"/>
</dbReference>
<dbReference type="CDD" id="cd12026">
    <property type="entry name" value="SH3_ZO-1"/>
    <property type="match status" value="1"/>
</dbReference>
<dbReference type="FunFam" id="2.30.42.10:FF:000009">
    <property type="entry name" value="Putative tight junction protein ZO-1"/>
    <property type="match status" value="1"/>
</dbReference>
<dbReference type="FunFam" id="2.30.42.10:FF:000013">
    <property type="entry name" value="Putative tight junction protein ZO-1"/>
    <property type="match status" value="1"/>
</dbReference>
<dbReference type="FunFam" id="2.60.220.30:FF:000004">
    <property type="entry name" value="tight junction protein ZO-1 isoform X1"/>
    <property type="match status" value="1"/>
</dbReference>
<dbReference type="FunFam" id="3.40.50.300:FF:000110">
    <property type="entry name" value="tight junction protein ZO-1 isoform X1"/>
    <property type="match status" value="1"/>
</dbReference>
<dbReference type="FunFam" id="2.30.42.10:FF:000170">
    <property type="entry name" value="tight junction protein ZO-1 isoform X2"/>
    <property type="match status" value="1"/>
</dbReference>
<dbReference type="Gene3D" id="2.30.42.10">
    <property type="match status" value="3"/>
</dbReference>
<dbReference type="Gene3D" id="2.60.220.30">
    <property type="match status" value="1"/>
</dbReference>
<dbReference type="Gene3D" id="3.40.50.300">
    <property type="entry name" value="P-loop containing nucleotide triphosphate hydrolases"/>
    <property type="match status" value="1"/>
</dbReference>
<dbReference type="Gene3D" id="2.30.30.40">
    <property type="entry name" value="SH3 Domains"/>
    <property type="match status" value="1"/>
</dbReference>
<dbReference type="InterPro" id="IPR008145">
    <property type="entry name" value="GK/Ca_channel_bsu"/>
</dbReference>
<dbReference type="InterPro" id="IPR008144">
    <property type="entry name" value="Guanylate_kin-like_dom"/>
</dbReference>
<dbReference type="InterPro" id="IPR027417">
    <property type="entry name" value="P-loop_NTPase"/>
</dbReference>
<dbReference type="InterPro" id="IPR001478">
    <property type="entry name" value="PDZ"/>
</dbReference>
<dbReference type="InterPro" id="IPR036034">
    <property type="entry name" value="PDZ_sf"/>
</dbReference>
<dbReference type="InterPro" id="IPR036028">
    <property type="entry name" value="SH3-like_dom_sf"/>
</dbReference>
<dbReference type="InterPro" id="IPR001452">
    <property type="entry name" value="SH3_domain"/>
</dbReference>
<dbReference type="InterPro" id="IPR005417">
    <property type="entry name" value="ZO"/>
</dbReference>
<dbReference type="InterPro" id="IPR005418">
    <property type="entry name" value="ZO-1"/>
</dbReference>
<dbReference type="InterPro" id="IPR035597">
    <property type="entry name" value="ZO-1_SH3"/>
</dbReference>
<dbReference type="InterPro" id="IPR000906">
    <property type="entry name" value="ZU5_dom"/>
</dbReference>
<dbReference type="PANTHER" id="PTHR13865">
    <property type="entry name" value="TIGHT JUNCTION PROTEIN"/>
    <property type="match status" value="1"/>
</dbReference>
<dbReference type="PANTHER" id="PTHR13865:SF25">
    <property type="entry name" value="TIGHT JUNCTION PROTEIN ZO-1"/>
    <property type="match status" value="1"/>
</dbReference>
<dbReference type="Pfam" id="PF00625">
    <property type="entry name" value="Guanylate_kin"/>
    <property type="match status" value="1"/>
</dbReference>
<dbReference type="Pfam" id="PF00595">
    <property type="entry name" value="PDZ"/>
    <property type="match status" value="3"/>
</dbReference>
<dbReference type="Pfam" id="PF07653">
    <property type="entry name" value="SH3_2"/>
    <property type="match status" value="1"/>
</dbReference>
<dbReference type="Pfam" id="PF00791">
    <property type="entry name" value="ZU5"/>
    <property type="match status" value="1"/>
</dbReference>
<dbReference type="PRINTS" id="PR01597">
    <property type="entry name" value="ZONOCCLUDNS"/>
</dbReference>
<dbReference type="PRINTS" id="PR01598">
    <property type="entry name" value="ZONOCCLUDNS1"/>
</dbReference>
<dbReference type="SMART" id="SM00072">
    <property type="entry name" value="GuKc"/>
    <property type="match status" value="1"/>
</dbReference>
<dbReference type="SMART" id="SM00228">
    <property type="entry name" value="PDZ"/>
    <property type="match status" value="3"/>
</dbReference>
<dbReference type="SMART" id="SM00218">
    <property type="entry name" value="ZU5"/>
    <property type="match status" value="1"/>
</dbReference>
<dbReference type="SUPFAM" id="SSF52540">
    <property type="entry name" value="P-loop containing nucleoside triphosphate hydrolases"/>
    <property type="match status" value="1"/>
</dbReference>
<dbReference type="SUPFAM" id="SSF50156">
    <property type="entry name" value="PDZ domain-like"/>
    <property type="match status" value="3"/>
</dbReference>
<dbReference type="SUPFAM" id="SSF50044">
    <property type="entry name" value="SH3-domain"/>
    <property type="match status" value="1"/>
</dbReference>
<dbReference type="PROSITE" id="PS50052">
    <property type="entry name" value="GUANYLATE_KINASE_2"/>
    <property type="match status" value="1"/>
</dbReference>
<dbReference type="PROSITE" id="PS50106">
    <property type="entry name" value="PDZ"/>
    <property type="match status" value="3"/>
</dbReference>
<dbReference type="PROSITE" id="PS50002">
    <property type="entry name" value="SH3"/>
    <property type="match status" value="1"/>
</dbReference>
<dbReference type="PROSITE" id="PS51145">
    <property type="entry name" value="ZU5"/>
    <property type="match status" value="1"/>
</dbReference>
<feature type="chain" id="PRO_0000443108" description="Tight junction protein ZO-1">
    <location>
        <begin position="1"/>
        <end position="1765"/>
    </location>
</feature>
<feature type="domain" description="PDZ 1" evidence="6">
    <location>
        <begin position="23"/>
        <end position="110"/>
    </location>
</feature>
<feature type="domain" description="PDZ 2" evidence="6">
    <location>
        <begin position="186"/>
        <end position="264"/>
    </location>
</feature>
<feature type="domain" description="PDZ 3" evidence="6">
    <location>
        <begin position="421"/>
        <end position="502"/>
    </location>
</feature>
<feature type="domain" description="SH3" evidence="7">
    <location>
        <begin position="516"/>
        <end position="584"/>
    </location>
</feature>
<feature type="domain" description="Guanylate kinase-like" evidence="5">
    <location>
        <begin position="690"/>
        <end position="791"/>
    </location>
</feature>
<feature type="domain" description="ZU5" evidence="8">
    <location>
        <begin position="1631"/>
        <end position="1765"/>
    </location>
</feature>
<feature type="region of interest" description="Disordered" evidence="9">
    <location>
        <begin position="102"/>
        <end position="189"/>
    </location>
</feature>
<feature type="region of interest" description="Disordered" evidence="9">
    <location>
        <begin position="296"/>
        <end position="363"/>
    </location>
</feature>
<feature type="region of interest" description="Occludin (OCLN)-binding region" evidence="4">
    <location>
        <begin position="633"/>
        <end position="876"/>
    </location>
</feature>
<feature type="region of interest" description="Disordered" evidence="9">
    <location>
        <begin position="825"/>
        <end position="941"/>
    </location>
</feature>
<feature type="region of interest" description="Disordered" evidence="9">
    <location>
        <begin position="1023"/>
        <end position="1042"/>
    </location>
</feature>
<feature type="region of interest" description="Disordered" evidence="9">
    <location>
        <begin position="1092"/>
        <end position="1585"/>
    </location>
</feature>
<feature type="region of interest" description="Actin-binding region (ABR)" evidence="4">
    <location>
        <begin position="1150"/>
        <end position="1370"/>
    </location>
</feature>
<feature type="compositionally biased region" description="Basic residues" evidence="9">
    <location>
        <begin position="102"/>
        <end position="112"/>
    </location>
</feature>
<feature type="compositionally biased region" description="Acidic residues" evidence="9">
    <location>
        <begin position="123"/>
        <end position="136"/>
    </location>
</feature>
<feature type="compositionally biased region" description="Basic and acidic residues" evidence="9">
    <location>
        <begin position="149"/>
        <end position="175"/>
    </location>
</feature>
<feature type="compositionally biased region" description="Basic and acidic residues" evidence="9">
    <location>
        <begin position="299"/>
        <end position="308"/>
    </location>
</feature>
<feature type="compositionally biased region" description="Polar residues" evidence="9">
    <location>
        <begin position="325"/>
        <end position="338"/>
    </location>
</feature>
<feature type="compositionally biased region" description="Basic and acidic residues" evidence="9">
    <location>
        <begin position="879"/>
        <end position="892"/>
    </location>
</feature>
<feature type="compositionally biased region" description="Low complexity" evidence="9">
    <location>
        <begin position="893"/>
        <end position="906"/>
    </location>
</feature>
<feature type="compositionally biased region" description="Basic and acidic residues" evidence="9">
    <location>
        <begin position="1106"/>
        <end position="1124"/>
    </location>
</feature>
<feature type="compositionally biased region" description="Basic and acidic residues" evidence="9">
    <location>
        <begin position="1268"/>
        <end position="1285"/>
    </location>
</feature>
<feature type="compositionally biased region" description="Basic and acidic residues" evidence="9">
    <location>
        <begin position="1335"/>
        <end position="1346"/>
    </location>
</feature>
<feature type="compositionally biased region" description="Low complexity" evidence="9">
    <location>
        <begin position="1388"/>
        <end position="1399"/>
    </location>
</feature>
<feature type="compositionally biased region" description="Basic and acidic residues" evidence="9">
    <location>
        <begin position="1401"/>
        <end position="1418"/>
    </location>
</feature>
<feature type="compositionally biased region" description="Polar residues" evidence="9">
    <location>
        <begin position="1442"/>
        <end position="1468"/>
    </location>
</feature>
<feature type="compositionally biased region" description="Polar residues" evidence="9">
    <location>
        <begin position="1509"/>
        <end position="1519"/>
    </location>
</feature>
<feature type="compositionally biased region" description="Basic and acidic residues" evidence="9">
    <location>
        <begin position="1535"/>
        <end position="1544"/>
    </location>
</feature>
<feature type="modified residue" description="Phosphoserine" evidence="14 15">
    <location>
        <position position="125"/>
    </location>
</feature>
<feature type="modified residue" description="Phosphotyrosine" evidence="14">
    <location>
        <position position="132"/>
    </location>
</feature>
<feature type="modified residue" description="Phosphoserine" evidence="15">
    <location>
        <position position="175"/>
    </location>
</feature>
<feature type="modified residue" description="Phosphoserine" evidence="15">
    <location>
        <position position="178"/>
    </location>
</feature>
<feature type="modified residue" description="Phosphoserine" evidence="4">
    <location>
        <position position="179"/>
    </location>
</feature>
<feature type="modified residue" description="Phosphothreonine" evidence="4">
    <location>
        <position position="185"/>
    </location>
</feature>
<feature type="modified residue" description="Phosphoserine" evidence="15">
    <location>
        <position position="212"/>
    </location>
</feature>
<feature type="modified residue" description="Phosphoserine" evidence="3">
    <location>
        <position position="241"/>
    </location>
</feature>
<feature type="modified residue" description="Phosphothreonine" evidence="4">
    <location>
        <position position="267"/>
    </location>
</feature>
<feature type="modified residue" description="Phosphoserine" evidence="15">
    <location>
        <position position="275"/>
    </location>
</feature>
<feature type="modified residue" description="Phosphoserine" evidence="15">
    <location>
        <position position="277"/>
    </location>
</feature>
<feature type="modified residue" description="Phosphoserine" evidence="15">
    <location>
        <position position="280"/>
    </location>
</feature>
<feature type="modified residue" description="Phosphoserine" evidence="4">
    <location>
        <position position="284"/>
    </location>
</feature>
<feature type="modified residue" description="Phosphoserine" evidence="15">
    <location>
        <position position="290"/>
    </location>
</feature>
<feature type="modified residue" description="Phosphoserine" evidence="15">
    <location>
        <position position="294"/>
    </location>
</feature>
<feature type="modified residue" description="Phosphoserine" evidence="15">
    <location>
        <position position="297"/>
    </location>
</feature>
<feature type="modified residue" description="Phosphoserine" evidence="15">
    <location>
        <position position="300"/>
    </location>
</feature>
<feature type="modified residue" description="Phosphoserine" evidence="3">
    <location>
        <position position="323"/>
    </location>
</feature>
<feature type="modified residue" description="Phosphoserine" evidence="4">
    <location>
        <position position="329"/>
    </location>
</feature>
<feature type="modified residue" description="Phosphoserine" evidence="4">
    <location>
        <position position="334"/>
    </location>
</feature>
<feature type="modified residue" description="Phosphoserine" evidence="4">
    <location>
        <position position="337"/>
    </location>
</feature>
<feature type="modified residue" description="Phosphoserine" evidence="4">
    <location>
        <position position="353"/>
    </location>
</feature>
<feature type="modified residue" description="Phosphothreonine" evidence="4">
    <location>
        <position position="354"/>
    </location>
</feature>
<feature type="modified residue" description="Phosphoserine" evidence="14 15">
    <location>
        <position position="617"/>
    </location>
</feature>
<feature type="modified residue" description="Phosphoserine" evidence="4">
    <location>
        <position position="622"/>
    </location>
</feature>
<feature type="modified residue" description="Phosphothreonine" evidence="4">
    <location>
        <position position="809"/>
    </location>
</feature>
<feature type="modified residue" description="Phosphoserine" evidence="15">
    <location>
        <position position="810"/>
    </location>
</feature>
<feature type="modified residue" description="Phosphoserine" evidence="4">
    <location>
        <position position="821"/>
    </location>
</feature>
<feature type="modified residue" description="Phosphotyrosine" evidence="3">
    <location>
        <position position="822"/>
    </location>
</feature>
<feature type="modified residue" description="Phosphoserine" evidence="3">
    <location>
        <position position="824"/>
    </location>
</feature>
<feature type="modified residue" description="Phosphoserine" evidence="15">
    <location>
        <position position="828"/>
    </location>
</feature>
<feature type="modified residue" description="Phosphoserine" evidence="4">
    <location>
        <position position="837"/>
    </location>
</feature>
<feature type="modified residue" description="Phosphothreonine" evidence="15">
    <location>
        <position position="846"/>
    </location>
</feature>
<feature type="modified residue" description="Phosphothreonine" evidence="3">
    <location>
        <position position="848"/>
    </location>
</feature>
<feature type="modified residue" description="Phosphothreonine" evidence="4">
    <location>
        <position position="854"/>
    </location>
</feature>
<feature type="modified residue" description="Phosphothreonine" evidence="4">
    <location>
        <position position="861"/>
    </location>
</feature>
<feature type="modified residue" description="Phosphothreonine" evidence="15">
    <location>
        <position position="868"/>
    </location>
</feature>
<feature type="modified residue" description="Phosphoserine" evidence="4">
    <location>
        <position position="912"/>
    </location>
</feature>
<feature type="modified residue" description="Phosphoserine" evidence="3">
    <location>
        <position position="1071"/>
    </location>
</feature>
<feature type="modified residue" description="Phosphotyrosine" evidence="3">
    <location>
        <position position="1139"/>
    </location>
</feature>
<feature type="modified residue" description="Phosphotyrosine" evidence="3">
    <location>
        <position position="1164"/>
    </location>
</feature>
<feature type="modified residue" description="Phosphotyrosine" evidence="3">
    <location>
        <position position="1353"/>
    </location>
</feature>
<feature type="modified residue" description="Phosphoserine" evidence="4">
    <location>
        <position position="1365"/>
    </location>
</feature>
<feature type="modified residue" description="Phosphoserine" evidence="4">
    <location>
        <position position="1411"/>
    </location>
</feature>
<feature type="modified residue" description="Phosphoserine" evidence="4">
    <location>
        <position position="1542"/>
    </location>
</feature>
<feature type="modified residue" description="Phosphoserine" evidence="15">
    <location>
        <position position="1614"/>
    </location>
</feature>
<comment type="function">
    <text evidence="1 3 4 11">TjpP1, Tjp2, and Tjp3 are closely related scaffolding proteins that link tight junction (TJ) transmembrane proteins such as claudins, junctional adhesion molecules, and occludin to the actin cytoskeleton (PubMed:9707407). The tight junction acts to limit movement of substances through the paracellular space and as a boundary between the compositionally distinct apical and basolateral plasma membrane domains of epithelial and endothelial cells. Necessary for lumenogenesis, and particularly efficient epithelial polarization and barrier formation (By similarity). Plays a role in the regulation of cell migration by targeting Cdc42bpb to the leading edge of migrating cells (By similarity). Plays an important role in podosome formation and associated function, thus regulating cell adhesion and matrix remodeling (By similarity). With Tjp2 and Tjp3, participates in the junctional retention and stability of the transcription factor Dbpa, but is not involved in its shuttling to the nucleus (By similarity). May play a role in mediating cell morphology changes during ameloblast differentiation via its role in tight junctions (By similarity).</text>
</comment>
<comment type="subunit">
    <text evidence="1 3 4 11">Homodimer (By similarity). Forms heterodimers TJP3 (By similarity). Forms a heterodimer (via PDZ2 domain) with TJP2/ZO2 (via PDZ2 domain) (By similarity). Interacts with OCLN (By similarity). Interacts with CALM, claudins, CGN/cingulin, CXADR, GJA12, GJD3 and UBN1 (By similarity). Interacts (via ZU5 domain) with CDC42BPB and MYZAP (By similarity). Interacts (via PDZ domain) with GJA1 (PubMed:9707407). Interacts (via PDZ domains) with ANKRD2 (By similarity). Interacts with BVES (via the C-terminus cytoplasmic tail) (By similarity). Interacts with HSPA4 (By similarity). Interacts with KIRREL1 (By similarity). Interacts with DLL1 (By similarity). Interacts with USP53 (via the C-terminal region) (By similarity). Interacts with DNMBP (via C-terminal domain); required for the apical cell-cell junction localization of DNMBP (By similarity). Interacts with SPEF1 (By similarity). Interacts (via N-terminus) with CTNNA1 (By similarity). Interacts with CLDN18 (By similarity). Interacts with CLDN16 (via TRV motif); this is a prerequisite for anchoring of CLDN16 at the tight junction. Interacts with PKP1; the interaction facilitates TJP1/ZO-1 localization to the plasma membrane (By similarity).</text>
</comment>
<comment type="subcellular location">
    <subcellularLocation>
        <location evidence="4">Cell membrane</location>
        <topology evidence="4">Peripheral membrane protein</topology>
        <orientation evidence="4">Cytoplasmic side</orientation>
    </subcellularLocation>
    <subcellularLocation>
        <location evidence="10 11">Cell junction</location>
        <location evidence="10 11">Tight junction</location>
    </subcellularLocation>
    <subcellularLocation>
        <location evidence="2">Cell junction</location>
    </subcellularLocation>
    <subcellularLocation>
        <location evidence="4">Cell junction</location>
        <location evidence="4">Gap junction</location>
    </subcellularLocation>
    <text evidence="4 10 11">Moves from the cytoplasm to the cell membrane concurrently with cell-cell contact (By similarity). Distributed over the entire lateral surface of the plasma membrane and other actin-rich structures (By similarity). Detected at the leading edge of migrating and wounded cells (By similarity). Colocalizes with SPEF1 at sites of cell-cell contact in intestinal epithelial cells (By similarity).</text>
</comment>
<comment type="domain">
    <text evidence="4">The 244-aa domain between residues 633 and 876 is the primary occludin (Ocln)-binding site and is required for stable association with the tight junction (By similarity).</text>
</comment>
<comment type="domain">
    <text evidence="4">The C-terminal region (residues 1151-1372) is an actin-binding region (ABR) that interacts directly with F-actin and plays an important role in the localization of Tjp1 at junctions (By similarity). The ABR is also required for the localization to puncta at the free edge of cells before initiation of cell-cell contact (By similarity). The ABR is also necessary for Tjp1 recruitment to podosomes (By similarity).</text>
</comment>
<comment type="domain">
    <text evidence="4 11">The second PDZ domain (PDZ2) mediates homodimerization and heterodimerization with Tjp2 and Tjp3 (By similarity). PDZ2 domain also mediates interaction with Gja1 (PubMed:9707407).</text>
</comment>
<comment type="PTM">
    <text evidence="4">Phosphorylated at tyrosine redidues in response to epidermal growth factor (EGF) (By similarity). This response is dependent on an intact actin microfilament system (By similarity). Dephosphorylated by Ptprj (By similarity).</text>
</comment>
<comment type="similarity">
    <text evidence="13">Belongs to the MAGUK family.</text>
</comment>